<dbReference type="EMBL" id="AK016169">
    <property type="status" value="NOT_ANNOTATED_CDS"/>
    <property type="molecule type" value="mRNA"/>
</dbReference>
<dbReference type="EMBL" id="AC092202">
    <property type="status" value="NOT_ANNOTATED_CDS"/>
    <property type="molecule type" value="Genomic_DNA"/>
</dbReference>
<dbReference type="EMBL" id="CH466620">
    <property type="protein sequence ID" value="EDL38809.1"/>
    <property type="molecule type" value="Genomic_DNA"/>
</dbReference>
<dbReference type="EMBL" id="BC049745">
    <property type="status" value="NOT_ANNOTATED_CDS"/>
    <property type="molecule type" value="mRNA"/>
</dbReference>
<dbReference type="RefSeq" id="NP_001371119.1">
    <property type="nucleotide sequence ID" value="NM_001384190.1"/>
</dbReference>
<dbReference type="SMR" id="A0A1B0GQX3"/>
<dbReference type="STRING" id="10090.ENSMUSP00000147291"/>
<dbReference type="Ensembl" id="ENSMUST00000196239.2">
    <property type="protein sequence ID" value="ENSMUSP00000147291.2"/>
    <property type="gene ID" value="ENSMUSG00000105734.2"/>
</dbReference>
<dbReference type="GeneID" id="67654"/>
<dbReference type="AGR" id="MGI:1914904"/>
<dbReference type="MGI" id="MGI:1914904">
    <property type="gene designation" value="Ctxnd2"/>
</dbReference>
<dbReference type="VEuPathDB" id="HostDB:ENSMUSG00000105734"/>
<dbReference type="GeneTree" id="ENSGT00940000164740"/>
<dbReference type="InParanoid" id="A0A1B0GQX3"/>
<dbReference type="PRO" id="PR:A0A1B0GQX3"/>
<dbReference type="Proteomes" id="UP000000589">
    <property type="component" value="Chromosome 3"/>
</dbReference>
<dbReference type="RNAct" id="A0A1B0GQX3">
    <property type="molecule type" value="protein"/>
</dbReference>
<dbReference type="Bgee" id="ENSMUSG00000105734">
    <property type="expression patterns" value="Expressed in testis and 14 other cell types or tissues"/>
</dbReference>
<dbReference type="GO" id="GO:0016020">
    <property type="term" value="C:membrane"/>
    <property type="evidence" value="ECO:0007669"/>
    <property type="project" value="UniProtKB-SubCell"/>
</dbReference>
<dbReference type="InterPro" id="IPR020066">
    <property type="entry name" value="Cortexin"/>
</dbReference>
<dbReference type="PANTHER" id="PTHR16736:SF6">
    <property type="entry name" value="CORTEXIN DOMAIN CONTAINING 2"/>
    <property type="match status" value="1"/>
</dbReference>
<dbReference type="PANTHER" id="PTHR16736">
    <property type="entry name" value="CORTEXIN-1-RELATED"/>
    <property type="match status" value="1"/>
</dbReference>
<dbReference type="Pfam" id="PF11057">
    <property type="entry name" value="Cortexin"/>
    <property type="match status" value="1"/>
</dbReference>
<protein>
    <recommendedName>
        <fullName evidence="1">Cortexin domain containing 2</fullName>
    </recommendedName>
</protein>
<organism>
    <name type="scientific">Mus musculus</name>
    <name type="common">Mouse</name>
    <dbReference type="NCBI Taxonomy" id="10090"/>
    <lineage>
        <taxon>Eukaryota</taxon>
        <taxon>Metazoa</taxon>
        <taxon>Chordata</taxon>
        <taxon>Craniata</taxon>
        <taxon>Vertebrata</taxon>
        <taxon>Euteleostomi</taxon>
        <taxon>Mammalia</taxon>
        <taxon>Eutheria</taxon>
        <taxon>Euarchontoglires</taxon>
        <taxon>Glires</taxon>
        <taxon>Rodentia</taxon>
        <taxon>Myomorpha</taxon>
        <taxon>Muroidea</taxon>
        <taxon>Muridae</taxon>
        <taxon>Murinae</taxon>
        <taxon>Mus</taxon>
        <taxon>Mus</taxon>
    </lineage>
</organism>
<accession>A0A1B0GQX3</accession>
<evidence type="ECO:0000250" key="1">
    <source>
        <dbReference type="UniProtKB" id="A0A1B0GV90"/>
    </source>
</evidence>
<evidence type="ECO:0000255" key="2"/>
<comment type="subcellular location">
    <subcellularLocation>
        <location evidence="2">Membrane</location>
        <topology evidence="2">Single-pass membrane protein</topology>
    </subcellularLocation>
</comment>
<name>CTXD2_MOUSE</name>
<gene>
    <name evidence="1" type="primary">Ctxnd2</name>
</gene>
<proteinExistence type="inferred from homology"/>
<reference key="1">
    <citation type="journal article" date="2005" name="Science">
        <title>The transcriptional landscape of the mammalian genome.</title>
        <authorList>
            <person name="Carninci P."/>
            <person name="Kasukawa T."/>
            <person name="Katayama S."/>
            <person name="Gough J."/>
            <person name="Frith M.C."/>
            <person name="Maeda N."/>
            <person name="Oyama R."/>
            <person name="Ravasi T."/>
            <person name="Lenhard B."/>
            <person name="Wells C."/>
            <person name="Kodzius R."/>
            <person name="Shimokawa K."/>
            <person name="Bajic V.B."/>
            <person name="Brenner S.E."/>
            <person name="Batalov S."/>
            <person name="Forrest A.R."/>
            <person name="Zavolan M."/>
            <person name="Davis M.J."/>
            <person name="Wilming L.G."/>
            <person name="Aidinis V."/>
            <person name="Allen J.E."/>
            <person name="Ambesi-Impiombato A."/>
            <person name="Apweiler R."/>
            <person name="Aturaliya R.N."/>
            <person name="Bailey T.L."/>
            <person name="Bansal M."/>
            <person name="Baxter L."/>
            <person name="Beisel K.W."/>
            <person name="Bersano T."/>
            <person name="Bono H."/>
            <person name="Chalk A.M."/>
            <person name="Chiu K.P."/>
            <person name="Choudhary V."/>
            <person name="Christoffels A."/>
            <person name="Clutterbuck D.R."/>
            <person name="Crowe M.L."/>
            <person name="Dalla E."/>
            <person name="Dalrymple B.P."/>
            <person name="de Bono B."/>
            <person name="Della Gatta G."/>
            <person name="di Bernardo D."/>
            <person name="Down T."/>
            <person name="Engstrom P."/>
            <person name="Fagiolini M."/>
            <person name="Faulkner G."/>
            <person name="Fletcher C.F."/>
            <person name="Fukushima T."/>
            <person name="Furuno M."/>
            <person name="Futaki S."/>
            <person name="Gariboldi M."/>
            <person name="Georgii-Hemming P."/>
            <person name="Gingeras T.R."/>
            <person name="Gojobori T."/>
            <person name="Green R.E."/>
            <person name="Gustincich S."/>
            <person name="Harbers M."/>
            <person name="Hayashi Y."/>
            <person name="Hensch T.K."/>
            <person name="Hirokawa N."/>
            <person name="Hill D."/>
            <person name="Huminiecki L."/>
            <person name="Iacono M."/>
            <person name="Ikeo K."/>
            <person name="Iwama A."/>
            <person name="Ishikawa T."/>
            <person name="Jakt M."/>
            <person name="Kanapin A."/>
            <person name="Katoh M."/>
            <person name="Kawasawa Y."/>
            <person name="Kelso J."/>
            <person name="Kitamura H."/>
            <person name="Kitano H."/>
            <person name="Kollias G."/>
            <person name="Krishnan S.P."/>
            <person name="Kruger A."/>
            <person name="Kummerfeld S.K."/>
            <person name="Kurochkin I.V."/>
            <person name="Lareau L.F."/>
            <person name="Lazarevic D."/>
            <person name="Lipovich L."/>
            <person name="Liu J."/>
            <person name="Liuni S."/>
            <person name="McWilliam S."/>
            <person name="Madan Babu M."/>
            <person name="Madera M."/>
            <person name="Marchionni L."/>
            <person name="Matsuda H."/>
            <person name="Matsuzawa S."/>
            <person name="Miki H."/>
            <person name="Mignone F."/>
            <person name="Miyake S."/>
            <person name="Morris K."/>
            <person name="Mottagui-Tabar S."/>
            <person name="Mulder N."/>
            <person name="Nakano N."/>
            <person name="Nakauchi H."/>
            <person name="Ng P."/>
            <person name="Nilsson R."/>
            <person name="Nishiguchi S."/>
            <person name="Nishikawa S."/>
            <person name="Nori F."/>
            <person name="Ohara O."/>
            <person name="Okazaki Y."/>
            <person name="Orlando V."/>
            <person name="Pang K.C."/>
            <person name="Pavan W.J."/>
            <person name="Pavesi G."/>
            <person name="Pesole G."/>
            <person name="Petrovsky N."/>
            <person name="Piazza S."/>
            <person name="Reed J."/>
            <person name="Reid J.F."/>
            <person name="Ring B.Z."/>
            <person name="Ringwald M."/>
            <person name="Rost B."/>
            <person name="Ruan Y."/>
            <person name="Salzberg S.L."/>
            <person name="Sandelin A."/>
            <person name="Schneider C."/>
            <person name="Schoenbach C."/>
            <person name="Sekiguchi K."/>
            <person name="Semple C.A."/>
            <person name="Seno S."/>
            <person name="Sessa L."/>
            <person name="Sheng Y."/>
            <person name="Shibata Y."/>
            <person name="Shimada H."/>
            <person name="Shimada K."/>
            <person name="Silva D."/>
            <person name="Sinclair B."/>
            <person name="Sperling S."/>
            <person name="Stupka E."/>
            <person name="Sugiura K."/>
            <person name="Sultana R."/>
            <person name="Takenaka Y."/>
            <person name="Taki K."/>
            <person name="Tammoja K."/>
            <person name="Tan S.L."/>
            <person name="Tang S."/>
            <person name="Taylor M.S."/>
            <person name="Tegner J."/>
            <person name="Teichmann S.A."/>
            <person name="Ueda H.R."/>
            <person name="van Nimwegen E."/>
            <person name="Verardo R."/>
            <person name="Wei C.L."/>
            <person name="Yagi K."/>
            <person name="Yamanishi H."/>
            <person name="Zabarovsky E."/>
            <person name="Zhu S."/>
            <person name="Zimmer A."/>
            <person name="Hide W."/>
            <person name="Bult C."/>
            <person name="Grimmond S.M."/>
            <person name="Teasdale R.D."/>
            <person name="Liu E.T."/>
            <person name="Brusic V."/>
            <person name="Quackenbush J."/>
            <person name="Wahlestedt C."/>
            <person name="Mattick J.S."/>
            <person name="Hume D.A."/>
            <person name="Kai C."/>
            <person name="Sasaki D."/>
            <person name="Tomaru Y."/>
            <person name="Fukuda S."/>
            <person name="Kanamori-Katayama M."/>
            <person name="Suzuki M."/>
            <person name="Aoki J."/>
            <person name="Arakawa T."/>
            <person name="Iida J."/>
            <person name="Imamura K."/>
            <person name="Itoh M."/>
            <person name="Kato T."/>
            <person name="Kawaji H."/>
            <person name="Kawagashira N."/>
            <person name="Kawashima T."/>
            <person name="Kojima M."/>
            <person name="Kondo S."/>
            <person name="Konno H."/>
            <person name="Nakano K."/>
            <person name="Ninomiya N."/>
            <person name="Nishio T."/>
            <person name="Okada M."/>
            <person name="Plessy C."/>
            <person name="Shibata K."/>
            <person name="Shiraki T."/>
            <person name="Suzuki S."/>
            <person name="Tagami M."/>
            <person name="Waki K."/>
            <person name="Watahiki A."/>
            <person name="Okamura-Oho Y."/>
            <person name="Suzuki H."/>
            <person name="Kawai J."/>
            <person name="Hayashizaki Y."/>
        </authorList>
    </citation>
    <scope>NUCLEOTIDE SEQUENCE [LARGE SCALE MRNA]</scope>
</reference>
<reference key="2">
    <citation type="journal article" date="2009" name="PLoS Biol.">
        <title>Lineage-specific biology revealed by a finished genome assembly of the mouse.</title>
        <authorList>
            <person name="Church D.M."/>
            <person name="Goodstadt L."/>
            <person name="Hillier L.W."/>
            <person name="Zody M.C."/>
            <person name="Goldstein S."/>
            <person name="She X."/>
            <person name="Bult C.J."/>
            <person name="Agarwala R."/>
            <person name="Cherry J.L."/>
            <person name="DiCuccio M."/>
            <person name="Hlavina W."/>
            <person name="Kapustin Y."/>
            <person name="Meric P."/>
            <person name="Maglott D."/>
            <person name="Birtle Z."/>
            <person name="Marques A.C."/>
            <person name="Graves T."/>
            <person name="Zhou S."/>
            <person name="Teague B."/>
            <person name="Potamousis K."/>
            <person name="Churas C."/>
            <person name="Place M."/>
            <person name="Herschleb J."/>
            <person name="Runnheim R."/>
            <person name="Forrest D."/>
            <person name="Amos-Landgraf J."/>
            <person name="Schwartz D.C."/>
            <person name="Cheng Z."/>
            <person name="Lindblad-Toh K."/>
            <person name="Eichler E.E."/>
            <person name="Ponting C.P."/>
        </authorList>
    </citation>
    <scope>NUCLEOTIDE SEQUENCE [LARGE SCALE GENOMIC DNA]</scope>
    <source>
        <strain>C57BL/6J</strain>
    </source>
</reference>
<reference key="3">
    <citation type="submission" date="2005-07" db="EMBL/GenBank/DDBJ databases">
        <authorList>
            <person name="Mural R.J."/>
            <person name="Adams M.D."/>
            <person name="Myers E.W."/>
            <person name="Smith H.O."/>
            <person name="Venter J.C."/>
        </authorList>
    </citation>
    <scope>NUCLEOTIDE SEQUENCE [LARGE SCALE GENOMIC DNA]</scope>
</reference>
<reference key="4">
    <citation type="journal article" date="2004" name="Genome Res.">
        <title>The status, quality, and expansion of the NIH full-length cDNA project: the Mammalian Gene Collection (MGC).</title>
        <authorList>
            <consortium name="The MGC Project Team"/>
        </authorList>
    </citation>
    <scope>NUCLEOTIDE SEQUENCE [LARGE SCALE MRNA]</scope>
</reference>
<sequence>MCVLMEDSSMSNGIDVDKGFAIAFVVLVFVFLIVMVFRCVKLVKNPYEVSSTTADLPLN</sequence>
<feature type="chain" id="PRO_0000442855" description="Cortexin domain containing 2">
    <location>
        <begin position="1"/>
        <end position="59"/>
    </location>
</feature>
<feature type="transmembrane region" description="Helical" evidence="2">
    <location>
        <begin position="20"/>
        <end position="40"/>
    </location>
</feature>
<keyword id="KW-0472">Membrane</keyword>
<keyword id="KW-1185">Reference proteome</keyword>
<keyword id="KW-0812">Transmembrane</keyword>
<keyword id="KW-1133">Transmembrane helix</keyword>